<keyword id="KW-0067">ATP-binding</keyword>
<keyword id="KW-0963">Cytoplasm</keyword>
<keyword id="KW-0324">Glycolysis</keyword>
<keyword id="KW-0418">Kinase</keyword>
<keyword id="KW-0547">Nucleotide-binding</keyword>
<keyword id="KW-0808">Transferase</keyword>
<feature type="chain" id="PRO_1000058088" description="Phosphoglycerate kinase">
    <location>
        <begin position="1"/>
        <end position="398"/>
    </location>
</feature>
<feature type="binding site" evidence="1">
    <location>
        <begin position="24"/>
        <end position="26"/>
    </location>
    <ligand>
        <name>substrate</name>
    </ligand>
</feature>
<feature type="binding site" evidence="1">
    <location>
        <position position="39"/>
    </location>
    <ligand>
        <name>substrate</name>
    </ligand>
</feature>
<feature type="binding site" evidence="1">
    <location>
        <begin position="62"/>
        <end position="65"/>
    </location>
    <ligand>
        <name>substrate</name>
    </ligand>
</feature>
<feature type="binding site" evidence="1">
    <location>
        <position position="121"/>
    </location>
    <ligand>
        <name>substrate</name>
    </ligand>
</feature>
<feature type="binding site" evidence="1">
    <location>
        <position position="154"/>
    </location>
    <ligand>
        <name>substrate</name>
    </ligand>
</feature>
<feature type="binding site" evidence="1">
    <location>
        <position position="205"/>
    </location>
    <ligand>
        <name>ATP</name>
        <dbReference type="ChEBI" id="CHEBI:30616"/>
    </ligand>
</feature>
<feature type="binding site" evidence="1">
    <location>
        <position position="296"/>
    </location>
    <ligand>
        <name>ATP</name>
        <dbReference type="ChEBI" id="CHEBI:30616"/>
    </ligand>
</feature>
<feature type="binding site" evidence="1">
    <location>
        <position position="327"/>
    </location>
    <ligand>
        <name>ATP</name>
        <dbReference type="ChEBI" id="CHEBI:30616"/>
    </ligand>
</feature>
<feature type="binding site" evidence="1">
    <location>
        <begin position="354"/>
        <end position="357"/>
    </location>
    <ligand>
        <name>ATP</name>
        <dbReference type="ChEBI" id="CHEBI:30616"/>
    </ligand>
</feature>
<evidence type="ECO:0000255" key="1">
    <source>
        <dbReference type="HAMAP-Rule" id="MF_00145"/>
    </source>
</evidence>
<protein>
    <recommendedName>
        <fullName evidence="1">Phosphoglycerate kinase</fullName>
        <ecNumber evidence="1">2.7.2.3</ecNumber>
    </recommendedName>
</protein>
<comment type="catalytic activity">
    <reaction evidence="1">
        <text>(2R)-3-phosphoglycerate + ATP = (2R)-3-phospho-glyceroyl phosphate + ADP</text>
        <dbReference type="Rhea" id="RHEA:14801"/>
        <dbReference type="ChEBI" id="CHEBI:30616"/>
        <dbReference type="ChEBI" id="CHEBI:57604"/>
        <dbReference type="ChEBI" id="CHEBI:58272"/>
        <dbReference type="ChEBI" id="CHEBI:456216"/>
        <dbReference type="EC" id="2.7.2.3"/>
    </reaction>
</comment>
<comment type="pathway">
    <text evidence="1">Carbohydrate degradation; glycolysis; pyruvate from D-glyceraldehyde 3-phosphate: step 2/5.</text>
</comment>
<comment type="subunit">
    <text evidence="1">Monomer.</text>
</comment>
<comment type="subcellular location">
    <subcellularLocation>
        <location evidence="1">Cytoplasm</location>
    </subcellularLocation>
</comment>
<comment type="similarity">
    <text evidence="1">Belongs to the phosphoglycerate kinase family.</text>
</comment>
<organism>
    <name type="scientific">Trichodesmium erythraeum (strain IMS101)</name>
    <dbReference type="NCBI Taxonomy" id="203124"/>
    <lineage>
        <taxon>Bacteria</taxon>
        <taxon>Bacillati</taxon>
        <taxon>Cyanobacteriota</taxon>
        <taxon>Cyanophyceae</taxon>
        <taxon>Oscillatoriophycideae</taxon>
        <taxon>Oscillatoriales</taxon>
        <taxon>Microcoleaceae</taxon>
        <taxon>Trichodesmium</taxon>
    </lineage>
</organism>
<gene>
    <name evidence="1" type="primary">pgk</name>
    <name type="ordered locus">Tery_3376</name>
</gene>
<proteinExistence type="inferred from homology"/>
<reference key="1">
    <citation type="journal article" date="2015" name="Proc. Natl. Acad. Sci. U.S.A.">
        <title>Trichodesmium genome maintains abundant, widespread noncoding DNA in situ, despite oligotrophic lifestyle.</title>
        <authorList>
            <person name="Walworth N."/>
            <person name="Pfreundt U."/>
            <person name="Nelson W.C."/>
            <person name="Mincer T."/>
            <person name="Heidelberg J.F."/>
            <person name="Fu F."/>
            <person name="Waterbury J.B."/>
            <person name="Glavina del Rio T."/>
            <person name="Goodwin L."/>
            <person name="Kyrpides N.C."/>
            <person name="Land M.L."/>
            <person name="Woyke T."/>
            <person name="Hutchins D.A."/>
            <person name="Hess W.R."/>
            <person name="Webb E.A."/>
        </authorList>
    </citation>
    <scope>NUCLEOTIDE SEQUENCE [LARGE SCALE GENOMIC DNA]</scope>
    <source>
        <strain>IMS101</strain>
    </source>
</reference>
<sequence>MTKKTVASLSKSDLSGKKVLMRADFNVPVDNGSITDDTRIRAALPTIQDLTEKGAKVILTSHFGRPKGKVNEKMRLTLVGERLSEVLGKEVKKCDDCIGDEVTSTVAEMKDGDVVLLENVRFYSGEEGNDPEFAKQLASVADLYVNDAFGTAHRAHASTEGVTKYLSPSVAGYLIEQELKFLQGAIDSPQKPLAAIIGGSKVSSKIGVIEALLDKCDKLLLGGGMIFTFYKARGLSVGKSLVEEDKIELAKSLEAKAKEKGVTMLLPTDVVVADKFDPEANTQTVSIEAIPDGWMGLDIGPESAKVFQDALADCKTVIWNGPMGVFEMEKFAKGTEAIAQTLADKQDAITIIGGGDSVAAVEQLGLGEKMSHISTGGGASLELLEGKKLPGIVALDDQ</sequence>
<dbReference type="EC" id="2.7.2.3" evidence="1"/>
<dbReference type="EMBL" id="CP000393">
    <property type="protein sequence ID" value="ABG52478.1"/>
    <property type="molecule type" value="Genomic_DNA"/>
</dbReference>
<dbReference type="RefSeq" id="WP_011612823.1">
    <property type="nucleotide sequence ID" value="NC_008312.1"/>
</dbReference>
<dbReference type="SMR" id="Q10Z46"/>
<dbReference type="STRING" id="203124.Tery_3376"/>
<dbReference type="KEGG" id="ter:Tery_3376"/>
<dbReference type="eggNOG" id="COG0126">
    <property type="taxonomic scope" value="Bacteria"/>
</dbReference>
<dbReference type="HOGENOM" id="CLU_025427_0_2_3"/>
<dbReference type="OrthoDB" id="9808460at2"/>
<dbReference type="UniPathway" id="UPA00109">
    <property type="reaction ID" value="UER00185"/>
</dbReference>
<dbReference type="GO" id="GO:0005829">
    <property type="term" value="C:cytosol"/>
    <property type="evidence" value="ECO:0007669"/>
    <property type="project" value="TreeGrafter"/>
</dbReference>
<dbReference type="GO" id="GO:0043531">
    <property type="term" value="F:ADP binding"/>
    <property type="evidence" value="ECO:0007669"/>
    <property type="project" value="TreeGrafter"/>
</dbReference>
<dbReference type="GO" id="GO:0005524">
    <property type="term" value="F:ATP binding"/>
    <property type="evidence" value="ECO:0007669"/>
    <property type="project" value="UniProtKB-KW"/>
</dbReference>
<dbReference type="GO" id="GO:0004618">
    <property type="term" value="F:phosphoglycerate kinase activity"/>
    <property type="evidence" value="ECO:0007669"/>
    <property type="project" value="UniProtKB-UniRule"/>
</dbReference>
<dbReference type="GO" id="GO:0006094">
    <property type="term" value="P:gluconeogenesis"/>
    <property type="evidence" value="ECO:0007669"/>
    <property type="project" value="TreeGrafter"/>
</dbReference>
<dbReference type="GO" id="GO:0006096">
    <property type="term" value="P:glycolytic process"/>
    <property type="evidence" value="ECO:0007669"/>
    <property type="project" value="UniProtKB-UniRule"/>
</dbReference>
<dbReference type="CDD" id="cd00318">
    <property type="entry name" value="Phosphoglycerate_kinase"/>
    <property type="match status" value="1"/>
</dbReference>
<dbReference type="FunFam" id="3.40.50.1260:FF:000002">
    <property type="entry name" value="Phosphoglycerate kinase"/>
    <property type="match status" value="1"/>
</dbReference>
<dbReference type="FunFam" id="3.40.50.1260:FF:000007">
    <property type="entry name" value="Phosphoglycerate kinase"/>
    <property type="match status" value="1"/>
</dbReference>
<dbReference type="Gene3D" id="3.40.50.1260">
    <property type="entry name" value="Phosphoglycerate kinase, N-terminal domain"/>
    <property type="match status" value="2"/>
</dbReference>
<dbReference type="HAMAP" id="MF_00145">
    <property type="entry name" value="Phosphoglyc_kinase"/>
    <property type="match status" value="1"/>
</dbReference>
<dbReference type="InterPro" id="IPR001576">
    <property type="entry name" value="Phosphoglycerate_kinase"/>
</dbReference>
<dbReference type="InterPro" id="IPR015911">
    <property type="entry name" value="Phosphoglycerate_kinase_CS"/>
</dbReference>
<dbReference type="InterPro" id="IPR015824">
    <property type="entry name" value="Phosphoglycerate_kinase_N"/>
</dbReference>
<dbReference type="InterPro" id="IPR036043">
    <property type="entry name" value="Phosphoglycerate_kinase_sf"/>
</dbReference>
<dbReference type="PANTHER" id="PTHR11406">
    <property type="entry name" value="PHOSPHOGLYCERATE KINASE"/>
    <property type="match status" value="1"/>
</dbReference>
<dbReference type="PANTHER" id="PTHR11406:SF23">
    <property type="entry name" value="PHOSPHOGLYCERATE KINASE 1, CHLOROPLASTIC-RELATED"/>
    <property type="match status" value="1"/>
</dbReference>
<dbReference type="Pfam" id="PF00162">
    <property type="entry name" value="PGK"/>
    <property type="match status" value="1"/>
</dbReference>
<dbReference type="PIRSF" id="PIRSF000724">
    <property type="entry name" value="Pgk"/>
    <property type="match status" value="1"/>
</dbReference>
<dbReference type="PRINTS" id="PR00477">
    <property type="entry name" value="PHGLYCKINASE"/>
</dbReference>
<dbReference type="SUPFAM" id="SSF53748">
    <property type="entry name" value="Phosphoglycerate kinase"/>
    <property type="match status" value="1"/>
</dbReference>
<dbReference type="PROSITE" id="PS00111">
    <property type="entry name" value="PGLYCERATE_KINASE"/>
    <property type="match status" value="1"/>
</dbReference>
<name>PGK_TRIEI</name>
<accession>Q10Z46</accession>